<comment type="function">
    <text evidence="1">Component of the SWR1 complex which mediates the ATP-dependent exchange of histone H2A for the H2A variant HZT1 leading to transcriptional regulation of selected genes by chromatin remodeling. Component of the NuA4 histone acetyltransferase complex which is involved in transcriptional activation of selected genes principally by acetylation of nucleosomal histone H4 and H2A. The NuA4 complex is also involved in DNA repair (By similarity).</text>
</comment>
<comment type="subunit">
    <text evidence="1">Component of the SWR1 chromatin-remodeling complex and of the NuA4 histone acetyltransferase complex.</text>
</comment>
<comment type="subcellular location">
    <subcellularLocation>
        <location evidence="1">Nucleus</location>
    </subcellularLocation>
</comment>
<comment type="similarity">
    <text evidence="3">Belongs to the SWC4 family.</text>
</comment>
<name>SWC4_CANAL</name>
<feature type="chain" id="PRO_0000076337" description="SWR1-complex protein 4">
    <location>
        <begin position="1"/>
        <end position="635"/>
    </location>
</feature>
<feature type="domain" description="SANT">
    <location>
        <begin position="303"/>
        <end position="353"/>
    </location>
</feature>
<feature type="region of interest" description="Disordered" evidence="2">
    <location>
        <begin position="1"/>
        <end position="38"/>
    </location>
</feature>
<feature type="region of interest" description="Disordered" evidence="2">
    <location>
        <begin position="148"/>
        <end position="305"/>
    </location>
</feature>
<feature type="region of interest" description="Disordered" evidence="2">
    <location>
        <begin position="458"/>
        <end position="486"/>
    </location>
</feature>
<feature type="compositionally biased region" description="Basic and acidic residues" evidence="2">
    <location>
        <begin position="148"/>
        <end position="174"/>
    </location>
</feature>
<feature type="compositionally biased region" description="Basic and acidic residues" evidence="2">
    <location>
        <begin position="192"/>
        <end position="240"/>
    </location>
</feature>
<feature type="compositionally biased region" description="Basic and acidic residues" evidence="2">
    <location>
        <begin position="263"/>
        <end position="299"/>
    </location>
</feature>
<gene>
    <name type="primary">SWC4</name>
    <name type="ordered locus">CAALFM_CR00400CA</name>
    <name type="ORF">CaO19.7492</name>
</gene>
<protein>
    <recommendedName>
        <fullName>SWR1-complex protein 4</fullName>
    </recommendedName>
</protein>
<evidence type="ECO:0000250" key="1"/>
<evidence type="ECO:0000256" key="2">
    <source>
        <dbReference type="SAM" id="MobiDB-lite"/>
    </source>
</evidence>
<evidence type="ECO:0000305" key="3"/>
<keyword id="KW-0010">Activator</keyword>
<keyword id="KW-0156">Chromatin regulator</keyword>
<keyword id="KW-0227">DNA damage</keyword>
<keyword id="KW-0234">DNA repair</keyword>
<keyword id="KW-0539">Nucleus</keyword>
<keyword id="KW-1185">Reference proteome</keyword>
<keyword id="KW-0804">Transcription</keyword>
<keyword id="KW-0805">Transcription regulation</keyword>
<dbReference type="EMBL" id="CP017630">
    <property type="protein sequence ID" value="AOW30811.1"/>
    <property type="molecule type" value="Genomic_DNA"/>
</dbReference>
<dbReference type="RefSeq" id="XP_718649.1">
    <property type="nucleotide sequence ID" value="XM_713556.1"/>
</dbReference>
<dbReference type="SMR" id="Q5AAJ7"/>
<dbReference type="FunCoup" id="Q5AAJ7">
    <property type="interactions" value="1014"/>
</dbReference>
<dbReference type="STRING" id="237561.Q5AAJ7"/>
<dbReference type="EnsemblFungi" id="CR_00400C_A-T">
    <property type="protein sequence ID" value="CR_00400C_A-T-p1"/>
    <property type="gene ID" value="CR_00400C_A"/>
</dbReference>
<dbReference type="GeneID" id="3639679"/>
<dbReference type="KEGG" id="cal:CAALFM_CR00400CA"/>
<dbReference type="CGD" id="CAL0000199374">
    <property type="gene designation" value="SWC4"/>
</dbReference>
<dbReference type="VEuPathDB" id="FungiDB:CR_00400C_A"/>
<dbReference type="eggNOG" id="KOG2656">
    <property type="taxonomic scope" value="Eukaryota"/>
</dbReference>
<dbReference type="HOGENOM" id="CLU_018539_4_0_1"/>
<dbReference type="InParanoid" id="Q5AAJ7"/>
<dbReference type="OMA" id="GNTTMYQ"/>
<dbReference type="OrthoDB" id="19740at2759"/>
<dbReference type="Proteomes" id="UP000000559">
    <property type="component" value="Chromosome R"/>
</dbReference>
<dbReference type="GO" id="GO:0035267">
    <property type="term" value="C:NuA4 histone acetyltransferase complex"/>
    <property type="evidence" value="ECO:0000314"/>
    <property type="project" value="CGD"/>
</dbReference>
<dbReference type="GO" id="GO:0000812">
    <property type="term" value="C:Swr1 complex"/>
    <property type="evidence" value="ECO:0000318"/>
    <property type="project" value="GO_Central"/>
</dbReference>
<dbReference type="GO" id="GO:0003714">
    <property type="term" value="F:transcription corepressor activity"/>
    <property type="evidence" value="ECO:0000318"/>
    <property type="project" value="GO_Central"/>
</dbReference>
<dbReference type="GO" id="GO:0006338">
    <property type="term" value="P:chromatin remodeling"/>
    <property type="evidence" value="ECO:0007669"/>
    <property type="project" value="InterPro"/>
</dbReference>
<dbReference type="GO" id="GO:0006281">
    <property type="term" value="P:DNA repair"/>
    <property type="evidence" value="ECO:0007669"/>
    <property type="project" value="UniProtKB-KW"/>
</dbReference>
<dbReference type="GO" id="GO:0000122">
    <property type="term" value="P:negative regulation of transcription by RNA polymerase II"/>
    <property type="evidence" value="ECO:0000318"/>
    <property type="project" value="GO_Central"/>
</dbReference>
<dbReference type="Gene3D" id="1.10.10.60">
    <property type="entry name" value="Homeodomain-like"/>
    <property type="match status" value="1"/>
</dbReference>
<dbReference type="InterPro" id="IPR032563">
    <property type="entry name" value="DAMP1_SANT-like"/>
</dbReference>
<dbReference type="InterPro" id="IPR008468">
    <property type="entry name" value="DMAP1"/>
</dbReference>
<dbReference type="InterPro" id="IPR009057">
    <property type="entry name" value="Homeodomain-like_sf"/>
</dbReference>
<dbReference type="InterPro" id="IPR001005">
    <property type="entry name" value="SANT/Myb"/>
</dbReference>
<dbReference type="InterPro" id="IPR027109">
    <property type="entry name" value="Swc4/Dmap1"/>
</dbReference>
<dbReference type="PANTHER" id="PTHR12855:SF10">
    <property type="entry name" value="DNA METHYLTRANSFERASE 1-ASSOCIATED PROTEIN 1"/>
    <property type="match status" value="1"/>
</dbReference>
<dbReference type="PANTHER" id="PTHR12855">
    <property type="entry name" value="DNA METHYLTRANSFERASE 1-ASSOCIATED PROTEIN 1 FAMILY MEMBER"/>
    <property type="match status" value="1"/>
</dbReference>
<dbReference type="Pfam" id="PF05499">
    <property type="entry name" value="DMAP1"/>
    <property type="match status" value="1"/>
</dbReference>
<dbReference type="Pfam" id="PF16282">
    <property type="entry name" value="SANT_DAMP1_like"/>
    <property type="match status" value="1"/>
</dbReference>
<dbReference type="SMART" id="SM00717">
    <property type="entry name" value="SANT"/>
    <property type="match status" value="1"/>
</dbReference>
<dbReference type="SUPFAM" id="SSF46689">
    <property type="entry name" value="Homeodomain-like"/>
    <property type="match status" value="1"/>
</dbReference>
<accession>Q5AAJ7</accession>
<accession>A0A1D8PRQ9</accession>
<organism>
    <name type="scientific">Candida albicans (strain SC5314 / ATCC MYA-2876)</name>
    <name type="common">Yeast</name>
    <dbReference type="NCBI Taxonomy" id="237561"/>
    <lineage>
        <taxon>Eukaryota</taxon>
        <taxon>Fungi</taxon>
        <taxon>Dikarya</taxon>
        <taxon>Ascomycota</taxon>
        <taxon>Saccharomycotina</taxon>
        <taxon>Pichiomycetes</taxon>
        <taxon>Debaryomycetaceae</taxon>
        <taxon>Candida/Lodderomyces clade</taxon>
        <taxon>Candida</taxon>
    </lineage>
</organism>
<reference key="1">
    <citation type="journal article" date="2004" name="Proc. Natl. Acad. Sci. U.S.A.">
        <title>The diploid genome sequence of Candida albicans.</title>
        <authorList>
            <person name="Jones T."/>
            <person name="Federspiel N.A."/>
            <person name="Chibana H."/>
            <person name="Dungan J."/>
            <person name="Kalman S."/>
            <person name="Magee B.B."/>
            <person name="Newport G."/>
            <person name="Thorstenson Y.R."/>
            <person name="Agabian N."/>
            <person name="Magee P.T."/>
            <person name="Davis R.W."/>
            <person name="Scherer S."/>
        </authorList>
    </citation>
    <scope>NUCLEOTIDE SEQUENCE [LARGE SCALE GENOMIC DNA]</scope>
    <source>
        <strain>SC5314 / ATCC MYA-2876</strain>
    </source>
</reference>
<reference key="2">
    <citation type="journal article" date="2007" name="Genome Biol.">
        <title>Assembly of the Candida albicans genome into sixteen supercontigs aligned on the eight chromosomes.</title>
        <authorList>
            <person name="van het Hoog M."/>
            <person name="Rast T.J."/>
            <person name="Martchenko M."/>
            <person name="Grindle S."/>
            <person name="Dignard D."/>
            <person name="Hogues H."/>
            <person name="Cuomo C."/>
            <person name="Berriman M."/>
            <person name="Scherer S."/>
            <person name="Magee B.B."/>
            <person name="Whiteway M."/>
            <person name="Chibana H."/>
            <person name="Nantel A."/>
            <person name="Magee P.T."/>
        </authorList>
    </citation>
    <scope>GENOME REANNOTATION</scope>
    <source>
        <strain>SC5314 / ATCC MYA-2876</strain>
    </source>
</reference>
<reference key="3">
    <citation type="journal article" date="2013" name="Genome Biol.">
        <title>Assembly of a phased diploid Candida albicans genome facilitates allele-specific measurements and provides a simple model for repeat and indel structure.</title>
        <authorList>
            <person name="Muzzey D."/>
            <person name="Schwartz K."/>
            <person name="Weissman J.S."/>
            <person name="Sherlock G."/>
        </authorList>
    </citation>
    <scope>NUCLEOTIDE SEQUENCE [LARGE SCALE GENOMIC DNA]</scope>
    <scope>GENOME REANNOTATION</scope>
    <source>
        <strain>SC5314 / ATCC MYA-2876</strain>
    </source>
</reference>
<proteinExistence type="inferred from homology"/>
<sequence>MSANDILDVLNIQRDESNQPPKKKQKSSSTPTLPDGKQLTGMARELYNLVGPNTPPINLNSNSYTANKEKMKKFKPSPWTRMPFTPKQGIELNHWVKGSKELIEQQEFEEDGTPKPYFFEKYNVQLEIPEFVDEDTYDLYMIEIKEYESKMKEERARREKERKEREKRDLEEKKKKQQQQQQKSQQNPQNQIKDDEKNQDTRNNTDKKDSEQKSEDKPTVEAKKETDEKKDDVVLKDNTNETKPVTETTKSETETTEQNNSEKTNENETNKTNDKDGEGNLTKSKDSATEDQSNNKKENDEDTESEWTYKETKHLFELCQAFELKWPIIHDRFPNPNRTAEDLKEQFYRICIKILENQKNKNQALIDSLKAYCKPRELERKQYLENLLKRTPAEIAEEESLVIEARRFEIAAKKMLMERSNLLTLLDSPQTTQNVSQYQSSQGITNLYNNLLIYDKHQKKKQMANKSNPQQEPVPPPIPLAASSSVKRDRGFQTQLQQYLSSFLKQNHHTNPAVKQEINSIQQLLMKRLTQKEEEAYGLYFHGTEKLNPGVMLRSQQKLPGLNQRQSILKSVNILLQEMDIPTGGGTSWKPIMPTRKTMAKYDELIRSVVTLLDVKKAKDKLESEIKLIKSQRGL</sequence>